<keyword id="KW-0456">Lyase</keyword>
<keyword id="KW-0479">Metal-binding</keyword>
<keyword id="KW-1185">Reference proteome</keyword>
<keyword id="KW-0964">Secreted</keyword>
<keyword id="KW-0732">Signal</keyword>
<keyword id="KW-0862">Zinc</keyword>
<gene>
    <name type="primary">cah-5</name>
    <name type="ORF">R173.1</name>
</gene>
<accession>Q10462</accession>
<name>CAH5_CAEEL</name>
<organism>
    <name type="scientific">Caenorhabditis elegans</name>
    <dbReference type="NCBI Taxonomy" id="6239"/>
    <lineage>
        <taxon>Eukaryota</taxon>
        <taxon>Metazoa</taxon>
        <taxon>Ecdysozoa</taxon>
        <taxon>Nematoda</taxon>
        <taxon>Chromadorea</taxon>
        <taxon>Rhabditida</taxon>
        <taxon>Rhabditina</taxon>
        <taxon>Rhabditomorpha</taxon>
        <taxon>Rhabditoidea</taxon>
        <taxon>Rhabditidae</taxon>
        <taxon>Peloderinae</taxon>
        <taxon>Caenorhabditis</taxon>
    </lineage>
</organism>
<protein>
    <recommendedName>
        <fullName>Putative carbonic anhydrase 5</fullName>
        <ecNumber>4.2.1.1</ecNumber>
    </recommendedName>
    <alternativeName>
        <fullName>Carbonate dehydratase 5</fullName>
    </alternativeName>
</protein>
<proteinExistence type="inferred from homology"/>
<sequence>MPSHLLVLSLLVALLVVVSCGPGSDHGWGYDENNGPDTWQGKCQNHLKQSPIDIRAPDVDYALLHRMHFLNYDMDGKIELSNTGRTLFAGGFESWQHKQPMIQGGGLKHRYKLAQFHLHWGQNDAVGSEHAMGSLHYPAELHLVHVREGLTLKEALSRPDGLAVVGVFLAKTNDPVANKFSPISERLHDLRHSGNKTELKNFRTKYVLPLDTEAFYRYEGSLTTPDCSEAVIWTVLAEPMAISSHQLHLLRQLHNKELVKSDKNYRPLQPLNGRRIQYRPSKLDRAMICSSFATTSVIITYVAILSAMLI</sequence>
<evidence type="ECO:0000250" key="1"/>
<evidence type="ECO:0000255" key="2"/>
<evidence type="ECO:0000255" key="3">
    <source>
        <dbReference type="PROSITE-ProRule" id="PRU01134"/>
    </source>
</evidence>
<evidence type="ECO:0000305" key="4"/>
<reference key="1">
    <citation type="journal article" date="1998" name="Science">
        <title>Genome sequence of the nematode C. elegans: a platform for investigating biology.</title>
        <authorList>
            <consortium name="The C. elegans sequencing consortium"/>
        </authorList>
    </citation>
    <scope>NUCLEOTIDE SEQUENCE [LARGE SCALE GENOMIC DNA]</scope>
    <source>
        <strain>Bristol N2</strain>
    </source>
</reference>
<comment type="function">
    <text>Reversible hydration of carbon dioxide.</text>
</comment>
<comment type="catalytic activity">
    <reaction>
        <text>hydrogencarbonate + H(+) = CO2 + H2O</text>
        <dbReference type="Rhea" id="RHEA:10748"/>
        <dbReference type="ChEBI" id="CHEBI:15377"/>
        <dbReference type="ChEBI" id="CHEBI:15378"/>
        <dbReference type="ChEBI" id="CHEBI:16526"/>
        <dbReference type="ChEBI" id="CHEBI:17544"/>
        <dbReference type="EC" id="4.2.1.1"/>
    </reaction>
</comment>
<comment type="subcellular location">
    <subcellularLocation>
        <location evidence="4">Secreted</location>
    </subcellularLocation>
</comment>
<comment type="similarity">
    <text evidence="4">Belongs to the alpha-carbonic anhydrase family.</text>
</comment>
<feature type="signal peptide" evidence="2">
    <location>
        <begin position="1"/>
        <end position="20"/>
    </location>
</feature>
<feature type="chain" id="PRO_0000004256" description="Putative carbonic anhydrase 5">
    <location>
        <begin position="21"/>
        <end position="310"/>
    </location>
</feature>
<feature type="domain" description="Alpha-carbonic anhydrase" evidence="3">
    <location>
        <begin position="26"/>
        <end position="280"/>
    </location>
</feature>
<feature type="binding site" evidence="3">
    <location>
        <position position="117"/>
    </location>
    <ligand>
        <name>Zn(2+)</name>
        <dbReference type="ChEBI" id="CHEBI:29105"/>
        <note>catalytic</note>
    </ligand>
</feature>
<feature type="binding site" evidence="3">
    <location>
        <position position="119"/>
    </location>
    <ligand>
        <name>Zn(2+)</name>
        <dbReference type="ChEBI" id="CHEBI:29105"/>
        <note>catalytic</note>
    </ligand>
</feature>
<feature type="binding site" evidence="3">
    <location>
        <position position="142"/>
    </location>
    <ligand>
        <name>Zn(2+)</name>
        <dbReference type="ChEBI" id="CHEBI:29105"/>
        <note>catalytic</note>
    </ligand>
</feature>
<feature type="binding site" evidence="1">
    <location>
        <begin position="223"/>
        <end position="224"/>
    </location>
    <ligand>
        <name>substrate</name>
    </ligand>
</feature>
<dbReference type="EC" id="4.2.1.1"/>
<dbReference type="EMBL" id="FO080190">
    <property type="protein sequence ID" value="CCD61848.1"/>
    <property type="molecule type" value="Genomic_DNA"/>
</dbReference>
<dbReference type="PIR" id="T16772">
    <property type="entry name" value="T16772"/>
</dbReference>
<dbReference type="RefSeq" id="NP_509186.3">
    <property type="nucleotide sequence ID" value="NM_076785.4"/>
</dbReference>
<dbReference type="SMR" id="Q10462"/>
<dbReference type="FunCoup" id="Q10462">
    <property type="interactions" value="81"/>
</dbReference>
<dbReference type="STRING" id="6239.R173.1.1"/>
<dbReference type="PaxDb" id="6239-R173.1"/>
<dbReference type="PeptideAtlas" id="Q10462"/>
<dbReference type="EnsemblMetazoa" id="R173.1.1">
    <property type="protein sequence ID" value="R173.1.1"/>
    <property type="gene ID" value="WBGene00000283"/>
</dbReference>
<dbReference type="GeneID" id="180972"/>
<dbReference type="KEGG" id="cel:CELE_R173.1"/>
<dbReference type="UCSC" id="R173.1">
    <property type="organism name" value="c. elegans"/>
</dbReference>
<dbReference type="AGR" id="WB:WBGene00000283"/>
<dbReference type="CTD" id="180972"/>
<dbReference type="WormBase" id="R173.1">
    <property type="protein sequence ID" value="CE36560"/>
    <property type="gene ID" value="WBGene00000283"/>
    <property type="gene designation" value="cah-5"/>
</dbReference>
<dbReference type="eggNOG" id="KOG0382">
    <property type="taxonomic scope" value="Eukaryota"/>
</dbReference>
<dbReference type="GeneTree" id="ENSGT00940000172445"/>
<dbReference type="HOGENOM" id="CLU_039326_2_0_1"/>
<dbReference type="InParanoid" id="Q10462"/>
<dbReference type="OMA" id="GHGEAYY"/>
<dbReference type="OrthoDB" id="429145at2759"/>
<dbReference type="PhylomeDB" id="Q10462"/>
<dbReference type="Reactome" id="R-CEL-1237044">
    <property type="pathway name" value="Erythrocytes take up carbon dioxide and release oxygen"/>
</dbReference>
<dbReference type="Reactome" id="R-CEL-1247673">
    <property type="pathway name" value="Erythrocytes take up oxygen and release carbon dioxide"/>
</dbReference>
<dbReference type="Reactome" id="R-CEL-1475029">
    <property type="pathway name" value="Reversible hydration of carbon dioxide"/>
</dbReference>
<dbReference type="PRO" id="PR:Q10462"/>
<dbReference type="Proteomes" id="UP000001940">
    <property type="component" value="Chromosome X"/>
</dbReference>
<dbReference type="Bgee" id="WBGene00000283">
    <property type="expression patterns" value="Expressed in larva and 3 other cell types or tissues"/>
</dbReference>
<dbReference type="GO" id="GO:0005737">
    <property type="term" value="C:cytoplasm"/>
    <property type="evidence" value="ECO:0000318"/>
    <property type="project" value="GO_Central"/>
</dbReference>
<dbReference type="GO" id="GO:0005576">
    <property type="term" value="C:extracellular region"/>
    <property type="evidence" value="ECO:0007669"/>
    <property type="project" value="UniProtKB-SubCell"/>
</dbReference>
<dbReference type="GO" id="GO:0004089">
    <property type="term" value="F:carbonate dehydratase activity"/>
    <property type="evidence" value="ECO:0000318"/>
    <property type="project" value="GO_Central"/>
</dbReference>
<dbReference type="GO" id="GO:0008270">
    <property type="term" value="F:zinc ion binding"/>
    <property type="evidence" value="ECO:0007669"/>
    <property type="project" value="InterPro"/>
</dbReference>
<dbReference type="CDD" id="cd00326">
    <property type="entry name" value="alpha_CA"/>
    <property type="match status" value="1"/>
</dbReference>
<dbReference type="Gene3D" id="3.10.200.10">
    <property type="entry name" value="Alpha carbonic anhydrase"/>
    <property type="match status" value="1"/>
</dbReference>
<dbReference type="InterPro" id="IPR001148">
    <property type="entry name" value="CA_dom"/>
</dbReference>
<dbReference type="InterPro" id="IPR036398">
    <property type="entry name" value="CA_dom_sf"/>
</dbReference>
<dbReference type="InterPro" id="IPR023561">
    <property type="entry name" value="Carbonic_anhydrase_a-class"/>
</dbReference>
<dbReference type="InterPro" id="IPR018338">
    <property type="entry name" value="Carbonic_anhydrase_a-class_CS"/>
</dbReference>
<dbReference type="PANTHER" id="PTHR18952">
    <property type="entry name" value="CARBONIC ANHYDRASE"/>
    <property type="match status" value="1"/>
</dbReference>
<dbReference type="PANTHER" id="PTHR18952:SF250">
    <property type="entry name" value="CARBONIC ANHYDRASE 5-RELATED"/>
    <property type="match status" value="1"/>
</dbReference>
<dbReference type="Pfam" id="PF00194">
    <property type="entry name" value="Carb_anhydrase"/>
    <property type="match status" value="1"/>
</dbReference>
<dbReference type="SMART" id="SM01057">
    <property type="entry name" value="Carb_anhydrase"/>
    <property type="match status" value="1"/>
</dbReference>
<dbReference type="SUPFAM" id="SSF51069">
    <property type="entry name" value="Carbonic anhydrase"/>
    <property type="match status" value="1"/>
</dbReference>
<dbReference type="PROSITE" id="PS00162">
    <property type="entry name" value="ALPHA_CA_1"/>
    <property type="match status" value="1"/>
</dbReference>
<dbReference type="PROSITE" id="PS51144">
    <property type="entry name" value="ALPHA_CA_2"/>
    <property type="match status" value="1"/>
</dbReference>